<comment type="function">
    <text evidence="1">Catalyzes an early step in the biosynthesis of tetrapyrroles. Binds two molecules of 5-aminolevulinate per subunit, each at a distinct site, and catalyzes their condensation to form porphobilinogen (By similarity).</text>
</comment>
<comment type="catalytic activity">
    <reaction>
        <text>2 5-aminolevulinate = porphobilinogen + 2 H2O + H(+)</text>
        <dbReference type="Rhea" id="RHEA:24064"/>
        <dbReference type="ChEBI" id="CHEBI:15377"/>
        <dbReference type="ChEBI" id="CHEBI:15378"/>
        <dbReference type="ChEBI" id="CHEBI:58126"/>
        <dbReference type="ChEBI" id="CHEBI:356416"/>
        <dbReference type="EC" id="4.2.1.24"/>
    </reaction>
</comment>
<comment type="cofactor">
    <cofactor evidence="1">
        <name>Mg(2+)</name>
        <dbReference type="ChEBI" id="CHEBI:18420"/>
    </cofactor>
    <text evidence="1">Binds 2 magnesium ions per monomer. The first magnesium ion is required for catalysis. The second functions as an allosteric activator.</text>
</comment>
<comment type="pathway">
    <text>Porphyrin-containing compound metabolism; protoporphyrin-IX biosynthesis; coproporphyrinogen-III from 5-aminolevulinate: step 1/4.</text>
</comment>
<comment type="pathway">
    <text>Porphyrin-containing compound metabolism; chlorophyll biosynthesis.</text>
</comment>
<comment type="subunit">
    <text evidence="1">Homooctamer.</text>
</comment>
<comment type="subcellular location">
    <subcellularLocation>
        <location evidence="1">Plastid</location>
        <location evidence="1">Chloroplast</location>
    </subcellularLocation>
</comment>
<comment type="similarity">
    <text evidence="3">Belongs to the ALAD family.</text>
</comment>
<dbReference type="EC" id="4.2.1.24"/>
<dbReference type="EMBL" id="AC084807">
    <property type="protein sequence ID" value="AAK43479.1"/>
    <property type="molecule type" value="Genomic_DNA"/>
</dbReference>
<dbReference type="EMBL" id="CP002684">
    <property type="protein sequence ID" value="AEE32031.1"/>
    <property type="molecule type" value="Genomic_DNA"/>
</dbReference>
<dbReference type="RefSeq" id="NP_175085.1">
    <property type="nucleotide sequence ID" value="NM_103545.2"/>
</dbReference>
<dbReference type="SMR" id="Q94LA4"/>
<dbReference type="FunCoup" id="Q94LA4">
    <property type="interactions" value="1969"/>
</dbReference>
<dbReference type="STRING" id="3702.Q94LA4"/>
<dbReference type="PaxDb" id="3702-AT1G44318.1"/>
<dbReference type="ProMEX" id="Q94LA4"/>
<dbReference type="ProteomicsDB" id="232213"/>
<dbReference type="EnsemblPlants" id="AT1G44318.1">
    <property type="protein sequence ID" value="AT1G44318.1"/>
    <property type="gene ID" value="AT1G44318"/>
</dbReference>
<dbReference type="GeneID" id="841025"/>
<dbReference type="Gramene" id="AT1G44318.1">
    <property type="protein sequence ID" value="AT1G44318.1"/>
    <property type="gene ID" value="AT1G44318"/>
</dbReference>
<dbReference type="KEGG" id="ath:AT1G44318"/>
<dbReference type="Araport" id="AT1G44318"/>
<dbReference type="TAIR" id="AT1G44318">
    <property type="gene designation" value="HEMB2"/>
</dbReference>
<dbReference type="eggNOG" id="KOG2794">
    <property type="taxonomic scope" value="Eukaryota"/>
</dbReference>
<dbReference type="HOGENOM" id="CLU_035731_1_0_1"/>
<dbReference type="InParanoid" id="Q94LA4"/>
<dbReference type="OMA" id="PCKIPAM"/>
<dbReference type="PhylomeDB" id="Q94LA4"/>
<dbReference type="BioCyc" id="ARA:AT1G44318-MONOMER"/>
<dbReference type="UniPathway" id="UPA00251">
    <property type="reaction ID" value="UER00318"/>
</dbReference>
<dbReference type="UniPathway" id="UPA00668"/>
<dbReference type="PRO" id="PR:Q94LA4"/>
<dbReference type="Proteomes" id="UP000006548">
    <property type="component" value="Chromosome 1"/>
</dbReference>
<dbReference type="ExpressionAtlas" id="Q94LA4">
    <property type="expression patterns" value="baseline and differential"/>
</dbReference>
<dbReference type="GO" id="GO:0009507">
    <property type="term" value="C:chloroplast"/>
    <property type="evidence" value="ECO:0007669"/>
    <property type="project" value="UniProtKB-SubCell"/>
</dbReference>
<dbReference type="GO" id="GO:0046872">
    <property type="term" value="F:metal ion binding"/>
    <property type="evidence" value="ECO:0007669"/>
    <property type="project" value="UniProtKB-KW"/>
</dbReference>
<dbReference type="GO" id="GO:0004655">
    <property type="term" value="F:porphobilinogen synthase activity"/>
    <property type="evidence" value="ECO:0007669"/>
    <property type="project" value="UniProtKB-EC"/>
</dbReference>
<dbReference type="GO" id="GO:0015995">
    <property type="term" value="P:chlorophyll biosynthetic process"/>
    <property type="evidence" value="ECO:0007669"/>
    <property type="project" value="UniProtKB-UniPathway"/>
</dbReference>
<dbReference type="GO" id="GO:0006782">
    <property type="term" value="P:protoporphyrinogen IX biosynthetic process"/>
    <property type="evidence" value="ECO:0007669"/>
    <property type="project" value="UniProtKB-UniPathway"/>
</dbReference>
<dbReference type="FunFam" id="3.20.20.70:FF:000101">
    <property type="entry name" value="Delta-aminolevulinic acid dehydratase"/>
    <property type="match status" value="1"/>
</dbReference>
<dbReference type="Gene3D" id="3.20.20.70">
    <property type="entry name" value="Aldolase class I"/>
    <property type="match status" value="1"/>
</dbReference>
<dbReference type="InterPro" id="IPR001731">
    <property type="entry name" value="ALAD"/>
</dbReference>
<dbReference type="InterPro" id="IPR013785">
    <property type="entry name" value="Aldolase_TIM"/>
</dbReference>
<dbReference type="NCBIfam" id="NF006762">
    <property type="entry name" value="PRK09283.1"/>
    <property type="match status" value="1"/>
</dbReference>
<dbReference type="PANTHER" id="PTHR11458">
    <property type="entry name" value="DELTA-AMINOLEVULINIC ACID DEHYDRATASE"/>
    <property type="match status" value="1"/>
</dbReference>
<dbReference type="PANTHER" id="PTHR11458:SF3">
    <property type="entry name" value="DELTA-AMINOLEVULINIC ACID DEHYDRATASE 2, CHLOROPLASTIC-RELATED"/>
    <property type="match status" value="1"/>
</dbReference>
<dbReference type="Pfam" id="PF00490">
    <property type="entry name" value="ALAD"/>
    <property type="match status" value="1"/>
</dbReference>
<dbReference type="PRINTS" id="PR00144">
    <property type="entry name" value="DALDHYDRTASE"/>
</dbReference>
<dbReference type="SMART" id="SM01004">
    <property type="entry name" value="ALAD"/>
    <property type="match status" value="1"/>
</dbReference>
<dbReference type="SUPFAM" id="SSF51569">
    <property type="entry name" value="Aldolase"/>
    <property type="match status" value="1"/>
</dbReference>
<gene>
    <name type="primary">HEMB2</name>
    <name type="ordered locus">At1g44318</name>
    <name type="ORF">T18F15.10</name>
</gene>
<feature type="transit peptide" description="Chloroplast" evidence="2">
    <location>
        <begin position="1"/>
        <end position="34"/>
    </location>
</feature>
<feature type="chain" id="PRO_0000422672" description="Probable delta-aminolevulinic acid dehydratase 2, chloroplastic">
    <location>
        <begin position="35"/>
        <end position="406"/>
    </location>
</feature>
<feature type="active site" description="Schiff-base intermediate with substrate" evidence="1">
    <location>
        <position position="275"/>
    </location>
</feature>
<feature type="active site" description="Schiff-base intermediate with substrate" evidence="1">
    <location>
        <position position="322"/>
    </location>
</feature>
<feature type="binding site" evidence="1">
    <location>
        <position position="285"/>
    </location>
    <ligand>
        <name>5-aminolevulinate</name>
        <dbReference type="ChEBI" id="CHEBI:356416"/>
        <label>1</label>
    </ligand>
</feature>
<feature type="binding site" evidence="1">
    <location>
        <position position="291"/>
    </location>
    <ligand>
        <name>5-aminolevulinate</name>
        <dbReference type="ChEBI" id="CHEBI:356416"/>
        <label>1</label>
    </ligand>
</feature>
<feature type="binding site" evidence="1">
    <location>
        <position position="307"/>
    </location>
    <ligand>
        <name>Mg(2+)</name>
        <dbReference type="ChEBI" id="CHEBI:18420"/>
    </ligand>
</feature>
<feature type="binding site" evidence="1">
    <location>
        <position position="348"/>
    </location>
    <ligand>
        <name>5-aminolevulinate</name>
        <dbReference type="ChEBI" id="CHEBI:356416"/>
        <label>2</label>
    </ligand>
</feature>
<feature type="binding site" evidence="1">
    <location>
        <position position="387"/>
    </location>
    <ligand>
        <name>5-aminolevulinate</name>
        <dbReference type="ChEBI" id="CHEBI:356416"/>
        <label>2</label>
    </ligand>
</feature>
<evidence type="ECO:0000250" key="1"/>
<evidence type="ECO:0000255" key="2"/>
<evidence type="ECO:0000305" key="3"/>
<reference key="1">
    <citation type="journal article" date="2000" name="Nature">
        <title>Sequence and analysis of chromosome 1 of the plant Arabidopsis thaliana.</title>
        <authorList>
            <person name="Theologis A."/>
            <person name="Ecker J.R."/>
            <person name="Palm C.J."/>
            <person name="Federspiel N.A."/>
            <person name="Kaul S."/>
            <person name="White O."/>
            <person name="Alonso J."/>
            <person name="Altafi H."/>
            <person name="Araujo R."/>
            <person name="Bowman C.L."/>
            <person name="Brooks S.Y."/>
            <person name="Buehler E."/>
            <person name="Chan A."/>
            <person name="Chao Q."/>
            <person name="Chen H."/>
            <person name="Cheuk R.F."/>
            <person name="Chin C.W."/>
            <person name="Chung M.K."/>
            <person name="Conn L."/>
            <person name="Conway A.B."/>
            <person name="Conway A.R."/>
            <person name="Creasy T.H."/>
            <person name="Dewar K."/>
            <person name="Dunn P."/>
            <person name="Etgu P."/>
            <person name="Feldblyum T.V."/>
            <person name="Feng J.-D."/>
            <person name="Fong B."/>
            <person name="Fujii C.Y."/>
            <person name="Gill J.E."/>
            <person name="Goldsmith A.D."/>
            <person name="Haas B."/>
            <person name="Hansen N.F."/>
            <person name="Hughes B."/>
            <person name="Huizar L."/>
            <person name="Hunter J.L."/>
            <person name="Jenkins J."/>
            <person name="Johnson-Hopson C."/>
            <person name="Khan S."/>
            <person name="Khaykin E."/>
            <person name="Kim C.J."/>
            <person name="Koo H.L."/>
            <person name="Kremenetskaia I."/>
            <person name="Kurtz D.B."/>
            <person name="Kwan A."/>
            <person name="Lam B."/>
            <person name="Langin-Hooper S."/>
            <person name="Lee A."/>
            <person name="Lee J.M."/>
            <person name="Lenz C.A."/>
            <person name="Li J.H."/>
            <person name="Li Y.-P."/>
            <person name="Lin X."/>
            <person name="Liu S.X."/>
            <person name="Liu Z.A."/>
            <person name="Luros J.S."/>
            <person name="Maiti R."/>
            <person name="Marziali A."/>
            <person name="Militscher J."/>
            <person name="Miranda M."/>
            <person name="Nguyen M."/>
            <person name="Nierman W.C."/>
            <person name="Osborne B.I."/>
            <person name="Pai G."/>
            <person name="Peterson J."/>
            <person name="Pham P.K."/>
            <person name="Rizzo M."/>
            <person name="Rooney T."/>
            <person name="Rowley D."/>
            <person name="Sakano H."/>
            <person name="Salzberg S.L."/>
            <person name="Schwartz J.R."/>
            <person name="Shinn P."/>
            <person name="Southwick A.M."/>
            <person name="Sun H."/>
            <person name="Tallon L.J."/>
            <person name="Tambunga G."/>
            <person name="Toriumi M.J."/>
            <person name="Town C.D."/>
            <person name="Utterback T."/>
            <person name="Van Aken S."/>
            <person name="Vaysberg M."/>
            <person name="Vysotskaia V.S."/>
            <person name="Walker M."/>
            <person name="Wu D."/>
            <person name="Yu G."/>
            <person name="Fraser C.M."/>
            <person name="Venter J.C."/>
            <person name="Davis R.W."/>
        </authorList>
    </citation>
    <scope>NUCLEOTIDE SEQUENCE [LARGE SCALE GENOMIC DNA]</scope>
    <source>
        <strain>cv. Columbia</strain>
    </source>
</reference>
<reference key="2">
    <citation type="journal article" date="2017" name="Plant J.">
        <title>Araport11: a complete reannotation of the Arabidopsis thaliana reference genome.</title>
        <authorList>
            <person name="Cheng C.Y."/>
            <person name="Krishnakumar V."/>
            <person name="Chan A.P."/>
            <person name="Thibaud-Nissen F."/>
            <person name="Schobel S."/>
            <person name="Town C.D."/>
        </authorList>
    </citation>
    <scope>GENOME REANNOTATION</scope>
    <source>
        <strain>cv. Columbia</strain>
    </source>
</reference>
<organism>
    <name type="scientific">Arabidopsis thaliana</name>
    <name type="common">Mouse-ear cress</name>
    <dbReference type="NCBI Taxonomy" id="3702"/>
    <lineage>
        <taxon>Eukaryota</taxon>
        <taxon>Viridiplantae</taxon>
        <taxon>Streptophyta</taxon>
        <taxon>Embryophyta</taxon>
        <taxon>Tracheophyta</taxon>
        <taxon>Spermatophyta</taxon>
        <taxon>Magnoliopsida</taxon>
        <taxon>eudicotyledons</taxon>
        <taxon>Gunneridae</taxon>
        <taxon>Pentapetalae</taxon>
        <taxon>rosids</taxon>
        <taxon>malvids</taxon>
        <taxon>Brassicales</taxon>
        <taxon>Brassicaceae</taxon>
        <taxon>Camelineae</taxon>
        <taxon>Arabidopsis</taxon>
    </lineage>
</organism>
<sequence>MTSSMFRSPCKIPSVKGFEQKSYVGLKAASYNVRVNSFKSSEVASQLQKIDSTLIWPVNALEAPPVPSKPATPLIDQPLQLSRRARRNRKCPTQRAAFQETNISPANFIYPLFIHEGEVDIPITSMPGRYMLGWRHGLIEEVARALDVGVNSVKLYPKVPEALKSPTGEEAFNDNGLIPRTVRLLKDRFPDLVIYTDVNFDEYSTTGHGGIVGEDGVILNDETIHQLRKQAVSQARAGADVVCTSEMLDGRVGAVRAALDAEGFQDVSIMSYSVKYTSSLYGRFRKVQLDKKTYQINPANSREALLEAREDEAEGADILMVKPALPSLDIIRLLKNQTLLPIGACQVSGEYSMIKAAGLLKMIDEEKVMMESLLCIRRAGADLILTYFALQAATKLCGENKRFSSN</sequence>
<accession>Q94LA4</accession>
<protein>
    <recommendedName>
        <fullName>Probable delta-aminolevulinic acid dehydratase 2, chloroplastic</fullName>
        <shortName>ALADH2</shortName>
        <ecNumber>4.2.1.24</ecNumber>
    </recommendedName>
    <alternativeName>
        <fullName>Porphobilinogen synthase</fullName>
    </alternativeName>
</protein>
<proteinExistence type="inferred from homology"/>
<keyword id="KW-0021">Allosteric enzyme</keyword>
<keyword id="KW-0149">Chlorophyll biosynthesis</keyword>
<keyword id="KW-0150">Chloroplast</keyword>
<keyword id="KW-0350">Heme biosynthesis</keyword>
<keyword id="KW-0456">Lyase</keyword>
<keyword id="KW-0460">Magnesium</keyword>
<keyword id="KW-0479">Metal-binding</keyword>
<keyword id="KW-0934">Plastid</keyword>
<keyword id="KW-0627">Porphyrin biosynthesis</keyword>
<keyword id="KW-1185">Reference proteome</keyword>
<keyword id="KW-0809">Transit peptide</keyword>
<name>HEM22_ARATH</name>